<keyword id="KW-0227">DNA damage</keyword>
<keyword id="KW-0233">DNA recombination</keyword>
<keyword id="KW-0234">DNA repair</keyword>
<keyword id="KW-0479">Metal-binding</keyword>
<keyword id="KW-0862">Zinc</keyword>
<keyword id="KW-0863">Zinc-finger</keyword>
<evidence type="ECO:0000255" key="1">
    <source>
        <dbReference type="HAMAP-Rule" id="MF_00017"/>
    </source>
</evidence>
<name>RECR_CHLPM</name>
<proteinExistence type="inferred from homology"/>
<protein>
    <recommendedName>
        <fullName evidence="1">Recombination protein RecR</fullName>
    </recommendedName>
</protein>
<reference key="1">
    <citation type="submission" date="2007-03" db="EMBL/GenBank/DDBJ databases">
        <title>Complete sequence of Prosthecochloris vibrioformis DSM 265.</title>
        <authorList>
            <consortium name="US DOE Joint Genome Institute"/>
            <person name="Copeland A."/>
            <person name="Lucas S."/>
            <person name="Lapidus A."/>
            <person name="Barry K."/>
            <person name="Detter J.C."/>
            <person name="Glavina del Rio T."/>
            <person name="Hammon N."/>
            <person name="Israni S."/>
            <person name="Pitluck S."/>
            <person name="Schmutz J."/>
            <person name="Larimer F."/>
            <person name="Land M."/>
            <person name="Hauser L."/>
            <person name="Mikhailova N."/>
            <person name="Li T."/>
            <person name="Overmann J."/>
            <person name="Schuster S.C."/>
            <person name="Bryant D.A."/>
            <person name="Richardson P."/>
        </authorList>
    </citation>
    <scope>NUCLEOTIDE SEQUENCE [LARGE SCALE GENOMIC DNA]</scope>
    <source>
        <strain>DSM 265 / 1930</strain>
    </source>
</reference>
<comment type="function">
    <text evidence="1">May play a role in DNA repair. It seems to be involved in an RecBC-independent recombinational process of DNA repair. It may act with RecF and RecO.</text>
</comment>
<comment type="similarity">
    <text evidence="1">Belongs to the RecR family.</text>
</comment>
<accession>A4SEY8</accession>
<organism>
    <name type="scientific">Chlorobium phaeovibrioides (strain DSM 265 / 1930)</name>
    <name type="common">Prosthecochloris vibrioformis (strain DSM 265)</name>
    <dbReference type="NCBI Taxonomy" id="290318"/>
    <lineage>
        <taxon>Bacteria</taxon>
        <taxon>Pseudomonadati</taxon>
        <taxon>Chlorobiota</taxon>
        <taxon>Chlorobiia</taxon>
        <taxon>Chlorobiales</taxon>
        <taxon>Chlorobiaceae</taxon>
        <taxon>Chlorobium/Pelodictyon group</taxon>
        <taxon>Chlorobium</taxon>
    </lineage>
</organism>
<sequence length="204" mass="22303">MRYTSAAIEALIDAFAKLPGVGRKTARRLAMHVLQQPRLEAERLASALLDAKDLVVRCSICQNVTDRDADPCRICTGQGRDQSVICVVESPVDVLAFEKTAHYKGLYHVLHGVISPLDGIGPDDINIRELLQRLQPEEGGEVREIVLALNPTVEGETTSLYLSRLIAPLGIMVTKIARGIPVGAELEFIDEATLSRAMEGRTTF</sequence>
<feature type="chain" id="PRO_1000074125" description="Recombination protein RecR">
    <location>
        <begin position="1"/>
        <end position="204"/>
    </location>
</feature>
<feature type="domain" description="Toprim" evidence="1">
    <location>
        <begin position="83"/>
        <end position="181"/>
    </location>
</feature>
<feature type="zinc finger region" description="C4-type" evidence="1">
    <location>
        <begin position="58"/>
        <end position="75"/>
    </location>
</feature>
<gene>
    <name evidence="1" type="primary">recR</name>
    <name type="ordered locus">Cvib_1033</name>
</gene>
<dbReference type="EMBL" id="CP000607">
    <property type="protein sequence ID" value="ABP37047.1"/>
    <property type="molecule type" value="Genomic_DNA"/>
</dbReference>
<dbReference type="SMR" id="A4SEY8"/>
<dbReference type="STRING" id="290318.Cvib_1033"/>
<dbReference type="KEGG" id="pvi:Cvib_1033"/>
<dbReference type="eggNOG" id="COG0353">
    <property type="taxonomic scope" value="Bacteria"/>
</dbReference>
<dbReference type="HOGENOM" id="CLU_060739_1_0_10"/>
<dbReference type="OrthoDB" id="9802672at2"/>
<dbReference type="GO" id="GO:0003677">
    <property type="term" value="F:DNA binding"/>
    <property type="evidence" value="ECO:0007669"/>
    <property type="project" value="UniProtKB-UniRule"/>
</dbReference>
<dbReference type="GO" id="GO:0008270">
    <property type="term" value="F:zinc ion binding"/>
    <property type="evidence" value="ECO:0007669"/>
    <property type="project" value="UniProtKB-KW"/>
</dbReference>
<dbReference type="GO" id="GO:0006310">
    <property type="term" value="P:DNA recombination"/>
    <property type="evidence" value="ECO:0007669"/>
    <property type="project" value="UniProtKB-UniRule"/>
</dbReference>
<dbReference type="GO" id="GO:0006281">
    <property type="term" value="P:DNA repair"/>
    <property type="evidence" value="ECO:0007669"/>
    <property type="project" value="UniProtKB-UniRule"/>
</dbReference>
<dbReference type="CDD" id="cd01025">
    <property type="entry name" value="TOPRIM_recR"/>
    <property type="match status" value="1"/>
</dbReference>
<dbReference type="Gene3D" id="3.30.60.80">
    <property type="match status" value="1"/>
</dbReference>
<dbReference type="Gene3D" id="3.40.1360.10">
    <property type="match status" value="1"/>
</dbReference>
<dbReference type="Gene3D" id="6.10.250.240">
    <property type="match status" value="1"/>
</dbReference>
<dbReference type="Gene3D" id="1.10.8.420">
    <property type="entry name" value="RecR Domain 1"/>
    <property type="match status" value="1"/>
</dbReference>
<dbReference type="HAMAP" id="MF_00017">
    <property type="entry name" value="RecR"/>
    <property type="match status" value="1"/>
</dbReference>
<dbReference type="InterPro" id="IPR000093">
    <property type="entry name" value="DNA_Rcmb_RecR"/>
</dbReference>
<dbReference type="InterPro" id="IPR023627">
    <property type="entry name" value="Rcmb_RecR"/>
</dbReference>
<dbReference type="InterPro" id="IPR006171">
    <property type="entry name" value="TOPRIM_dom"/>
</dbReference>
<dbReference type="InterPro" id="IPR034137">
    <property type="entry name" value="TOPRIM_RecR"/>
</dbReference>
<dbReference type="NCBIfam" id="TIGR00615">
    <property type="entry name" value="recR"/>
    <property type="match status" value="1"/>
</dbReference>
<dbReference type="PANTHER" id="PTHR30446">
    <property type="entry name" value="RECOMBINATION PROTEIN RECR"/>
    <property type="match status" value="1"/>
</dbReference>
<dbReference type="PANTHER" id="PTHR30446:SF0">
    <property type="entry name" value="RECOMBINATION PROTEIN RECR"/>
    <property type="match status" value="1"/>
</dbReference>
<dbReference type="Pfam" id="PF21175">
    <property type="entry name" value="RecR_C"/>
    <property type="match status" value="1"/>
</dbReference>
<dbReference type="Pfam" id="PF21176">
    <property type="entry name" value="RecR_HhH"/>
    <property type="match status" value="1"/>
</dbReference>
<dbReference type="Pfam" id="PF13662">
    <property type="entry name" value="Toprim_4"/>
    <property type="match status" value="1"/>
</dbReference>
<dbReference type="SMART" id="SM00493">
    <property type="entry name" value="TOPRIM"/>
    <property type="match status" value="1"/>
</dbReference>
<dbReference type="SUPFAM" id="SSF111304">
    <property type="entry name" value="Recombination protein RecR"/>
    <property type="match status" value="1"/>
</dbReference>
<dbReference type="PROSITE" id="PS50880">
    <property type="entry name" value="TOPRIM"/>
    <property type="match status" value="1"/>
</dbReference>